<proteinExistence type="inferred from homology"/>
<feature type="signal peptide" description="Tat-type signal" evidence="1">
    <location>
        <begin position="1"/>
        <end position="45"/>
    </location>
</feature>
<feature type="chain" id="PRO_1000164659" description="Protein-methionine-sulfoxide reductase catalytic subunit MsrP" evidence="1">
    <location>
        <begin position="46"/>
        <end position="312"/>
    </location>
</feature>
<feature type="binding site" evidence="1">
    <location>
        <position position="69"/>
    </location>
    <ligand>
        <name>Mo-molybdopterin</name>
        <dbReference type="ChEBI" id="CHEBI:71302"/>
    </ligand>
</feature>
<feature type="binding site" evidence="1">
    <location>
        <begin position="72"/>
        <end position="73"/>
    </location>
    <ligand>
        <name>Mo-molybdopterin</name>
        <dbReference type="ChEBI" id="CHEBI:71302"/>
    </ligand>
</feature>
<feature type="binding site" evidence="1">
    <location>
        <position position="126"/>
    </location>
    <ligand>
        <name>Mo-molybdopterin</name>
        <dbReference type="ChEBI" id="CHEBI:71302"/>
    </ligand>
    <ligandPart>
        <name>Mo</name>
        <dbReference type="ChEBI" id="CHEBI:28685"/>
    </ligandPart>
</feature>
<feature type="binding site" evidence="1">
    <location>
        <position position="161"/>
    </location>
    <ligand>
        <name>Mo-molybdopterin</name>
        <dbReference type="ChEBI" id="CHEBI:71302"/>
    </ligand>
</feature>
<feature type="binding site" evidence="1">
    <location>
        <position position="211"/>
    </location>
    <ligand>
        <name>Mo-molybdopterin</name>
        <dbReference type="ChEBI" id="CHEBI:71302"/>
    </ligand>
</feature>
<feature type="binding site" evidence="1">
    <location>
        <position position="216"/>
    </location>
    <ligand>
        <name>Mo-molybdopterin</name>
        <dbReference type="ChEBI" id="CHEBI:71302"/>
    </ligand>
</feature>
<feature type="binding site" evidence="1">
    <location>
        <begin position="227"/>
        <end position="229"/>
    </location>
    <ligand>
        <name>Mo-molybdopterin</name>
        <dbReference type="ChEBI" id="CHEBI:71302"/>
    </ligand>
</feature>
<comment type="function">
    <text evidence="1">Part of the MsrPQ system that repairs oxidized periplasmic proteins containing methionine sulfoxide residues (Met-O), using respiratory chain electrons. Thus protects these proteins from oxidative-stress damage caused by reactive species of oxygen and chlorine generated by the host defense mechanisms. MsrPQ is essential for the maintenance of envelope integrity under bleach stress, rescuing a wide series of structurally unrelated periplasmic proteins from methionine oxidation. The catalytic subunit MsrP is non-stereospecific, being able to reduce both (R-) and (S-) diastereoisomers of methionine sulfoxide.</text>
</comment>
<comment type="catalytic activity">
    <reaction evidence="1">
        <text>L-methionyl-[protein] + a quinone + H2O = L-methionyl-(S)-S-oxide-[protein] + a quinol</text>
        <dbReference type="Rhea" id="RHEA:51292"/>
        <dbReference type="Rhea" id="RHEA-COMP:12313"/>
        <dbReference type="Rhea" id="RHEA-COMP:12315"/>
        <dbReference type="ChEBI" id="CHEBI:15377"/>
        <dbReference type="ChEBI" id="CHEBI:16044"/>
        <dbReference type="ChEBI" id="CHEBI:24646"/>
        <dbReference type="ChEBI" id="CHEBI:44120"/>
        <dbReference type="ChEBI" id="CHEBI:132124"/>
    </reaction>
</comment>
<comment type="catalytic activity">
    <reaction evidence="1">
        <text>L-methionyl-[protein] + a quinone + H2O = L-methionyl-(R)-S-oxide-[protein] + a quinol</text>
        <dbReference type="Rhea" id="RHEA:51296"/>
        <dbReference type="Rhea" id="RHEA-COMP:12313"/>
        <dbReference type="Rhea" id="RHEA-COMP:12314"/>
        <dbReference type="ChEBI" id="CHEBI:15377"/>
        <dbReference type="ChEBI" id="CHEBI:16044"/>
        <dbReference type="ChEBI" id="CHEBI:24646"/>
        <dbReference type="ChEBI" id="CHEBI:45764"/>
        <dbReference type="ChEBI" id="CHEBI:132124"/>
    </reaction>
</comment>
<comment type="cofactor">
    <cofactor evidence="1">
        <name>Mo-molybdopterin</name>
        <dbReference type="ChEBI" id="CHEBI:71302"/>
    </cofactor>
    <text evidence="1">Binds 1 Mo-molybdopterin (Mo-MPT) cofactor per subunit.</text>
</comment>
<comment type="subunit">
    <text evidence="1">Heterodimer of a catalytic subunit (MsrP) and a heme-binding subunit (MsrQ).</text>
</comment>
<comment type="subcellular location">
    <subcellularLocation>
        <location evidence="1">Periplasm</location>
    </subcellularLocation>
    <text evidence="1">Is attached to the inner membrane when interacting with the MsrQ subunit.</text>
</comment>
<comment type="PTM">
    <text evidence="1">Predicted to be exported by the Tat system. The position of the signal peptide cleavage has not been experimentally proven.</text>
</comment>
<comment type="similarity">
    <text evidence="1">Belongs to the MsrP family.</text>
</comment>
<dbReference type="EC" id="1.8.5.-" evidence="1"/>
<dbReference type="EMBL" id="CP001389">
    <property type="protein sequence ID" value="ACP24999.1"/>
    <property type="molecule type" value="Genomic_DNA"/>
</dbReference>
<dbReference type="RefSeq" id="WP_012707776.1">
    <property type="nucleotide sequence ID" value="NC_012587.1"/>
</dbReference>
<dbReference type="RefSeq" id="YP_002825752.1">
    <property type="nucleotide sequence ID" value="NC_012587.1"/>
</dbReference>
<dbReference type="SMR" id="C3MB06"/>
<dbReference type="STRING" id="394.NGR_c12170"/>
<dbReference type="KEGG" id="rhi:NGR_c12170"/>
<dbReference type="PATRIC" id="fig|394.7.peg.4034"/>
<dbReference type="eggNOG" id="COG2041">
    <property type="taxonomic scope" value="Bacteria"/>
</dbReference>
<dbReference type="HOGENOM" id="CLU_045520_0_0_5"/>
<dbReference type="OrthoDB" id="9795587at2"/>
<dbReference type="Proteomes" id="UP000001054">
    <property type="component" value="Chromosome"/>
</dbReference>
<dbReference type="GO" id="GO:0042597">
    <property type="term" value="C:periplasmic space"/>
    <property type="evidence" value="ECO:0007669"/>
    <property type="project" value="UniProtKB-SubCell"/>
</dbReference>
<dbReference type="GO" id="GO:0046872">
    <property type="term" value="F:metal ion binding"/>
    <property type="evidence" value="ECO:0007669"/>
    <property type="project" value="UniProtKB-KW"/>
</dbReference>
<dbReference type="GO" id="GO:0043546">
    <property type="term" value="F:molybdopterin cofactor binding"/>
    <property type="evidence" value="ECO:0007669"/>
    <property type="project" value="UniProtKB-UniRule"/>
</dbReference>
<dbReference type="GO" id="GO:0016672">
    <property type="term" value="F:oxidoreductase activity, acting on a sulfur group of donors, quinone or similar compound as acceptor"/>
    <property type="evidence" value="ECO:0007669"/>
    <property type="project" value="UniProtKB-UniRule"/>
</dbReference>
<dbReference type="GO" id="GO:0030091">
    <property type="term" value="P:protein repair"/>
    <property type="evidence" value="ECO:0007669"/>
    <property type="project" value="UniProtKB-UniRule"/>
</dbReference>
<dbReference type="Gene3D" id="3.90.420.10">
    <property type="entry name" value="Oxidoreductase, molybdopterin-binding domain"/>
    <property type="match status" value="1"/>
</dbReference>
<dbReference type="HAMAP" id="MF_01206">
    <property type="entry name" value="MsrP"/>
    <property type="match status" value="1"/>
</dbReference>
<dbReference type="InterPro" id="IPR022867">
    <property type="entry name" value="MsrP"/>
</dbReference>
<dbReference type="InterPro" id="IPR000572">
    <property type="entry name" value="OxRdtase_Mopterin-bd_dom"/>
</dbReference>
<dbReference type="InterPro" id="IPR036374">
    <property type="entry name" value="OxRdtase_Mopterin-bd_sf"/>
</dbReference>
<dbReference type="InterPro" id="IPR006311">
    <property type="entry name" value="TAT_signal"/>
</dbReference>
<dbReference type="NCBIfam" id="NF003767">
    <property type="entry name" value="PRK05363.1"/>
    <property type="match status" value="1"/>
</dbReference>
<dbReference type="PANTHER" id="PTHR43032">
    <property type="entry name" value="PROTEIN-METHIONINE-SULFOXIDE REDUCTASE"/>
    <property type="match status" value="1"/>
</dbReference>
<dbReference type="PANTHER" id="PTHR43032:SF3">
    <property type="entry name" value="PROTEIN-METHIONINE-SULFOXIDE REDUCTASE CATALYTIC SUBUNIT MSRP"/>
    <property type="match status" value="1"/>
</dbReference>
<dbReference type="Pfam" id="PF00174">
    <property type="entry name" value="Oxidored_molyb"/>
    <property type="match status" value="1"/>
</dbReference>
<dbReference type="SUPFAM" id="SSF56524">
    <property type="entry name" value="Oxidoreductase molybdopterin-binding domain"/>
    <property type="match status" value="1"/>
</dbReference>
<dbReference type="PROSITE" id="PS51318">
    <property type="entry name" value="TAT"/>
    <property type="match status" value="1"/>
</dbReference>
<accession>C3MB06</accession>
<keyword id="KW-0479">Metal-binding</keyword>
<keyword id="KW-0500">Molybdenum</keyword>
<keyword id="KW-0560">Oxidoreductase</keyword>
<keyword id="KW-0574">Periplasm</keyword>
<keyword id="KW-1185">Reference proteome</keyword>
<keyword id="KW-0732">Signal</keyword>
<sequence>MPVYRPPRIAASEITPERFFLDRRSFLAAAGGLVLGGTGMAHAAALKTSASPYKVDETLTPEKDVTSYNNFYEFGTGKADPATNSASFKPTPWTVKVDGLVGKPRQFGLDELLALPLEERIYRMRCVEAWSMVIPWVGFPLASLLDKVEPLGSAKYVAFETVVRPEEMPGQAGYFQPLPWPYQEGLRLDEARHPLTILAVGLYGKTLPNQNGAPLRLVVPWKYGFKGIKSIVRISLTETAPPCTWNLAAPDEYGFYANVNPAVDHPRWSQATENRIGEGGFFGSNRRDTLPFNGYADEVAGLYAGMDLRVNF</sequence>
<reference key="1">
    <citation type="journal article" date="2009" name="Appl. Environ. Microbiol.">
        <title>Rhizobium sp. strain NGR234 possesses a remarkable number of secretion systems.</title>
        <authorList>
            <person name="Schmeisser C."/>
            <person name="Liesegang H."/>
            <person name="Krysciak D."/>
            <person name="Bakkou N."/>
            <person name="Le Quere A."/>
            <person name="Wollherr A."/>
            <person name="Heinemeyer I."/>
            <person name="Morgenstern B."/>
            <person name="Pommerening-Roeser A."/>
            <person name="Flores M."/>
            <person name="Palacios R."/>
            <person name="Brenner S."/>
            <person name="Gottschalk G."/>
            <person name="Schmitz R.A."/>
            <person name="Broughton W.J."/>
            <person name="Perret X."/>
            <person name="Strittmatter A.W."/>
            <person name="Streit W.R."/>
        </authorList>
    </citation>
    <scope>NUCLEOTIDE SEQUENCE [LARGE SCALE GENOMIC DNA]</scope>
    <source>
        <strain>NBRC 101917 / NGR234</strain>
    </source>
</reference>
<evidence type="ECO:0000255" key="1">
    <source>
        <dbReference type="HAMAP-Rule" id="MF_01206"/>
    </source>
</evidence>
<organism>
    <name type="scientific">Sinorhizobium fredii (strain NBRC 101917 / NGR234)</name>
    <dbReference type="NCBI Taxonomy" id="394"/>
    <lineage>
        <taxon>Bacteria</taxon>
        <taxon>Pseudomonadati</taxon>
        <taxon>Pseudomonadota</taxon>
        <taxon>Alphaproteobacteria</taxon>
        <taxon>Hyphomicrobiales</taxon>
        <taxon>Rhizobiaceae</taxon>
        <taxon>Sinorhizobium/Ensifer group</taxon>
        <taxon>Sinorhizobium</taxon>
    </lineage>
</organism>
<protein>
    <recommendedName>
        <fullName evidence="1">Protein-methionine-sulfoxide reductase catalytic subunit MsrP</fullName>
        <ecNumber evidence="1">1.8.5.-</ecNumber>
    </recommendedName>
</protein>
<gene>
    <name evidence="1" type="primary">msrP</name>
    <name type="ordered locus">NGR_c12170</name>
</gene>
<name>MSRP_SINFN</name>